<proteinExistence type="evidence at protein level"/>
<name>FHAB_MYCTU</name>
<gene>
    <name type="primary">fhaB</name>
    <name type="synonym">fipA</name>
    <name type="ordered locus">Rv0019c</name>
</gene>
<reference key="1">
    <citation type="journal article" date="1998" name="Nature">
        <title>Deciphering the biology of Mycobacterium tuberculosis from the complete genome sequence.</title>
        <authorList>
            <person name="Cole S.T."/>
            <person name="Brosch R."/>
            <person name="Parkhill J."/>
            <person name="Garnier T."/>
            <person name="Churcher C.M."/>
            <person name="Harris D.E."/>
            <person name="Gordon S.V."/>
            <person name="Eiglmeier K."/>
            <person name="Gas S."/>
            <person name="Barry C.E. III"/>
            <person name="Tekaia F."/>
            <person name="Badcock K."/>
            <person name="Basham D."/>
            <person name="Brown D."/>
            <person name="Chillingworth T."/>
            <person name="Connor R."/>
            <person name="Davies R.M."/>
            <person name="Devlin K."/>
            <person name="Feltwell T."/>
            <person name="Gentles S."/>
            <person name="Hamlin N."/>
            <person name="Holroyd S."/>
            <person name="Hornsby T."/>
            <person name="Jagels K."/>
            <person name="Krogh A."/>
            <person name="McLean J."/>
            <person name="Moule S."/>
            <person name="Murphy L.D."/>
            <person name="Oliver S."/>
            <person name="Osborne J."/>
            <person name="Quail M.A."/>
            <person name="Rajandream M.A."/>
            <person name="Rogers J."/>
            <person name="Rutter S."/>
            <person name="Seeger K."/>
            <person name="Skelton S."/>
            <person name="Squares S."/>
            <person name="Squares R."/>
            <person name="Sulston J.E."/>
            <person name="Taylor K."/>
            <person name="Whitehead S."/>
            <person name="Barrell B.G."/>
        </authorList>
    </citation>
    <scope>NUCLEOTIDE SEQUENCE [LARGE SCALE GENOMIC DNA]</scope>
    <source>
        <strain>ATCC 25618 / H37Rv</strain>
    </source>
</reference>
<reference key="2">
    <citation type="journal article" date="2009" name="J. Biol. Chem.">
        <title>Forkhead-associated domain-containing protein Rv0019c and polyketide-associated protein PapA5, from substrates of serine/threonine protein kinase PknB to interacting proteins of Mycobacterium tuberculosis.</title>
        <authorList>
            <person name="Gupta M."/>
            <person name="Sajid A."/>
            <person name="Arora G."/>
            <person name="Tandon V."/>
            <person name="Singh Y."/>
        </authorList>
    </citation>
    <scope>INTERACTION WITH PKNB AND PAPA5</scope>
    <scope>PHOSPHORYLATION AT THR-36</scope>
    <scope>DEPHOSPHORYLATION</scope>
    <scope>MUTAGENESIS OF THR-36; THR-50; ARG-87 AND SER-101</scope>
</reference>
<reference key="3">
    <citation type="journal article" date="2010" name="PLoS ONE">
        <title>Novel role of phosphorylation-dependent interaction between FtsZ and FipA in mycobacterial cell division.</title>
        <authorList>
            <person name="Sureka K."/>
            <person name="Hossain T."/>
            <person name="Mukherjee P."/>
            <person name="Chatterjee P."/>
            <person name="Datta P."/>
            <person name="Kundu M."/>
            <person name="Basu J."/>
        </authorList>
    </citation>
    <scope>RETRACTED PAPER</scope>
    <source>
        <strain>ATCC 25618 / H37Rv</strain>
    </source>
</reference>
<reference key="4">
    <citation type="journal article" date="2022" name="PLoS ONE">
        <authorList>
            <consortium name="PLOS ONE Editors"/>
        </authorList>
    </citation>
    <scope>RETRACTION NOTICE OF PUBMED:20066037</scope>
</reference>
<reference key="5">
    <citation type="journal article" date="2011" name="Mol. Cell. Proteomics">
        <title>Proteogenomic analysis of Mycobacterium tuberculosis by high resolution mass spectrometry.</title>
        <authorList>
            <person name="Kelkar D.S."/>
            <person name="Kumar D."/>
            <person name="Kumar P."/>
            <person name="Balakrishnan L."/>
            <person name="Muthusamy B."/>
            <person name="Yadav A.K."/>
            <person name="Shrivastava P."/>
            <person name="Marimuthu A."/>
            <person name="Anand S."/>
            <person name="Sundaram H."/>
            <person name="Kingsbury R."/>
            <person name="Harsha H.C."/>
            <person name="Nair B."/>
            <person name="Prasad T.S."/>
            <person name="Chauhan D.S."/>
            <person name="Katoch K."/>
            <person name="Katoch V.M."/>
            <person name="Kumar P."/>
            <person name="Chaerkady R."/>
            <person name="Ramachandran S."/>
            <person name="Dash D."/>
            <person name="Pandey A."/>
        </authorList>
    </citation>
    <scope>IDENTIFICATION BY MASS SPECTROMETRY [LARGE SCALE ANALYSIS]</scope>
    <source>
        <strain>ATCC 25618 / H37Rv</strain>
    </source>
</reference>
<evidence type="ECO:0000255" key="1"/>
<evidence type="ECO:0000255" key="2">
    <source>
        <dbReference type="PROSITE-ProRule" id="PRU00086"/>
    </source>
</evidence>
<evidence type="ECO:0000269" key="3">
    <source>
    </source>
</evidence>
<evidence type="ECO:0000305" key="4"/>
<evidence type="ECO:0000305" key="5">
    <source>
    </source>
</evidence>
<feature type="chain" id="PRO_0000419671" description="FHA domain-containing protein FhaB">
    <location>
        <begin position="1"/>
        <end position="155"/>
    </location>
</feature>
<feature type="transmembrane region" description="Helical" evidence="1">
    <location>
        <begin position="6"/>
        <end position="28"/>
    </location>
</feature>
<feature type="domain" description="FHA" evidence="2">
    <location>
        <begin position="83"/>
        <end position="132"/>
    </location>
</feature>
<feature type="modified residue" description="Phosphothreonine; by PknB" evidence="3">
    <location>
        <position position="36"/>
    </location>
</feature>
<feature type="mutagenesis site" description="Lack of phosphorylation." evidence="3">
    <original>T</original>
    <variation>A</variation>
    <location>
        <position position="36"/>
    </location>
</feature>
<feature type="mutagenesis site" description="Does not affect phosphorylation." evidence="3">
    <original>T</original>
    <variation>A</variation>
    <location>
        <position position="50"/>
    </location>
</feature>
<feature type="mutagenesis site" description="Impairs interaction with PknB and PapA5." evidence="3">
    <original>R</original>
    <variation>A</variation>
    <location>
        <position position="87"/>
    </location>
</feature>
<feature type="mutagenesis site" description="Impairs interaction with PknB. Does not affect interaction with PapA5." evidence="3">
    <original>S</original>
    <variation>A</variation>
    <location>
        <position position="101"/>
    </location>
</feature>
<keyword id="KW-1003">Cell membrane</keyword>
<keyword id="KW-0472">Membrane</keyword>
<keyword id="KW-0597">Phosphoprotein</keyword>
<keyword id="KW-1185">Reference proteome</keyword>
<keyword id="KW-0812">Transmembrane</keyword>
<keyword id="KW-1133">Transmembrane helix</keyword>
<dbReference type="EMBL" id="AL123456">
    <property type="protein sequence ID" value="CCP42741.1"/>
    <property type="molecule type" value="Genomic_DNA"/>
</dbReference>
<dbReference type="PIR" id="A70700">
    <property type="entry name" value="A70700"/>
</dbReference>
<dbReference type="RefSeq" id="NP_214533.1">
    <property type="nucleotide sequence ID" value="NC_000962.3"/>
</dbReference>
<dbReference type="RefSeq" id="WP_003400373.1">
    <property type="nucleotide sequence ID" value="NZ_NVQJ01000005.1"/>
</dbReference>
<dbReference type="SMR" id="P9WJB5"/>
<dbReference type="STRING" id="83332.Rv0019c"/>
<dbReference type="iPTMnet" id="P9WJB5"/>
<dbReference type="PaxDb" id="83332-Rv0019c"/>
<dbReference type="GeneID" id="887079"/>
<dbReference type="KEGG" id="mtu:Rv0019c"/>
<dbReference type="KEGG" id="mtv:RVBD_0019c"/>
<dbReference type="TubercuList" id="Rv0019c"/>
<dbReference type="eggNOG" id="COG1716">
    <property type="taxonomic scope" value="Bacteria"/>
</dbReference>
<dbReference type="InParanoid" id="P9WJB5"/>
<dbReference type="OrthoDB" id="277520at2"/>
<dbReference type="PhylomeDB" id="P9WJB5"/>
<dbReference type="Proteomes" id="UP000001584">
    <property type="component" value="Chromosome"/>
</dbReference>
<dbReference type="GO" id="GO:0005576">
    <property type="term" value="C:extracellular region"/>
    <property type="evidence" value="ECO:0007005"/>
    <property type="project" value="MTBBASE"/>
</dbReference>
<dbReference type="GO" id="GO:0005886">
    <property type="term" value="C:plasma membrane"/>
    <property type="evidence" value="ECO:0007005"/>
    <property type="project" value="MTBBASE"/>
</dbReference>
<dbReference type="GO" id="GO:0003729">
    <property type="term" value="F:mRNA binding"/>
    <property type="evidence" value="ECO:0000318"/>
    <property type="project" value="GO_Central"/>
</dbReference>
<dbReference type="CDD" id="cd22693">
    <property type="entry name" value="FHA_FhaB-like"/>
    <property type="match status" value="1"/>
</dbReference>
<dbReference type="FunFam" id="2.60.200.20:FF:000032">
    <property type="entry name" value="FHA domain-containing protein"/>
    <property type="match status" value="1"/>
</dbReference>
<dbReference type="Gene3D" id="2.60.200.20">
    <property type="match status" value="1"/>
</dbReference>
<dbReference type="InterPro" id="IPR050923">
    <property type="entry name" value="Cell_Proc_Reg/RNA_Proc"/>
</dbReference>
<dbReference type="InterPro" id="IPR000253">
    <property type="entry name" value="FHA_dom"/>
</dbReference>
<dbReference type="InterPro" id="IPR008984">
    <property type="entry name" value="SMAD_FHA_dom_sf"/>
</dbReference>
<dbReference type="PANTHER" id="PTHR23308">
    <property type="entry name" value="NUCLEAR INHIBITOR OF PROTEIN PHOSPHATASE-1"/>
    <property type="match status" value="1"/>
</dbReference>
<dbReference type="Pfam" id="PF00498">
    <property type="entry name" value="FHA"/>
    <property type="match status" value="1"/>
</dbReference>
<dbReference type="SMART" id="SM00240">
    <property type="entry name" value="FHA"/>
    <property type="match status" value="1"/>
</dbReference>
<dbReference type="SUPFAM" id="SSF49879">
    <property type="entry name" value="SMAD/FHA domain"/>
    <property type="match status" value="1"/>
</dbReference>
<dbReference type="PROSITE" id="PS50006">
    <property type="entry name" value="FHA_DOMAIN"/>
    <property type="match status" value="1"/>
</dbReference>
<accession>P9WJB5</accession>
<accession>F2GPM3</accession>
<accession>L0T5G4</accession>
<accession>P71589</accession>
<accession>Q7DAK4</accession>
<comment type="subunit">
    <text evidence="3">Interacts with (phosphorylated) PknB via the FHA domain. Interacts with PapA5 via a phosphoindependent interaction involving N-terminal residues preceding the FHA domain.</text>
</comment>
<comment type="subcellular location">
    <subcellularLocation>
        <location evidence="4">Cell membrane</location>
        <topology evidence="1">Single-pass membrane protein</topology>
    </subcellularLocation>
</comment>
<comment type="PTM">
    <text evidence="3">Phosphorylated by PknB (PubMed:19826007). Dephosphorylated by PstP (PubMed:19826007).</text>
</comment>
<comment type="caution">
    <text evidence="5">The article by Sureka et al was retracted by the editors after publication. Concerns were raised regarding the results presented in multiple figure panels. The raw data or replacement panels that were available did not satisfactorily address all the issues, thus questioning the integrity of the data.</text>
</comment>
<protein>
    <recommendedName>
        <fullName>FHA domain-containing protein FhaB</fullName>
    </recommendedName>
    <alternativeName>
        <fullName>FtsZ-interacting protein A</fullName>
    </alternativeName>
</protein>
<organism>
    <name type="scientific">Mycobacterium tuberculosis (strain ATCC 25618 / H37Rv)</name>
    <dbReference type="NCBI Taxonomy" id="83332"/>
    <lineage>
        <taxon>Bacteria</taxon>
        <taxon>Bacillati</taxon>
        <taxon>Actinomycetota</taxon>
        <taxon>Actinomycetes</taxon>
        <taxon>Mycobacteriales</taxon>
        <taxon>Mycobacteriaceae</taxon>
        <taxon>Mycobacterium</taxon>
        <taxon>Mycobacterium tuberculosis complex</taxon>
    </lineage>
</organism>
<sequence>MQGLVLQLTRAGFLMLLWVFIWSVLRILKTDIYAPTGAVMMRRGLALRGTLLGARQRRHAARYLVVTEGALTGARITLSEQPVLIGRADDSTLVLTDDYASTRHARLSMRGSEWYVEDLGSTNGTYLDRAKVTTAVRVPIGTPVRIGKTAIELRP</sequence>